<comment type="function">
    <text evidence="1">Component of the SOS system and an inhibitor of cell division. Accumulation of SulA causes rapid cessation of cell division and the appearance of long, non-septate filaments. In the presence of GTP, binds a polymerization-competent form of FtsZ in a 1:1 ratio, thus inhibiting FtsZ polymerization and therefore preventing it from participating in the assembly of the Z ring. This mechanism prevents the premature segregation of damaged DNA to daughter cells during cell division.</text>
</comment>
<comment type="subunit">
    <text evidence="1">Interacts with FtsZ.</text>
</comment>
<comment type="induction">
    <text evidence="1">By DNA damage, as part of the SOS response.</text>
</comment>
<comment type="PTM">
    <text evidence="1">Is rapidly cleaved and degraded by the Lon protease once DNA damage is repaired.</text>
</comment>
<comment type="similarity">
    <text evidence="1">Belongs to the SulA family.</text>
</comment>
<organism>
    <name type="scientific">Pectobacterium carotovorum subsp. carotovorum (strain PC1)</name>
    <dbReference type="NCBI Taxonomy" id="561230"/>
    <lineage>
        <taxon>Bacteria</taxon>
        <taxon>Pseudomonadati</taxon>
        <taxon>Pseudomonadota</taxon>
        <taxon>Gammaproteobacteria</taxon>
        <taxon>Enterobacterales</taxon>
        <taxon>Pectobacteriaceae</taxon>
        <taxon>Pectobacterium</taxon>
    </lineage>
</organism>
<accession>C6DKX8</accession>
<proteinExistence type="inferred from homology"/>
<evidence type="ECO:0000255" key="1">
    <source>
        <dbReference type="HAMAP-Rule" id="MF_01179"/>
    </source>
</evidence>
<keyword id="KW-0131">Cell cycle</keyword>
<keyword id="KW-0132">Cell division</keyword>
<keyword id="KW-0227">DNA damage</keyword>
<keyword id="KW-0717">Septation</keyword>
<keyword id="KW-0742">SOS response</keyword>
<sequence>MRTQSISSHNVQSSSFSANQHAAETSISAGGIISEIVYNADQPIVTHLLLPLLQQLGTQSRWLLWLSPQQKLSRPWVQQSGLPLDKMVQLHHINPLFTVDAMERALLTGNYSAVLCWLPHELTEEEKVRLRHAAQAGNTYGFIMRPESTGGDAYRLFPSLKIHSTLYH</sequence>
<gene>
    <name evidence="1" type="primary">sulA</name>
    <name type="ordered locus">PC1_2548</name>
</gene>
<name>SULA_PECCP</name>
<reference key="1">
    <citation type="submission" date="2009-07" db="EMBL/GenBank/DDBJ databases">
        <title>Complete sequence of Pectobacterium carotovorum subsp. carotovorum PC1.</title>
        <authorList>
            <consortium name="US DOE Joint Genome Institute"/>
            <person name="Lucas S."/>
            <person name="Copeland A."/>
            <person name="Lapidus A."/>
            <person name="Glavina del Rio T."/>
            <person name="Tice H."/>
            <person name="Bruce D."/>
            <person name="Goodwin L."/>
            <person name="Pitluck S."/>
            <person name="Munk A.C."/>
            <person name="Brettin T."/>
            <person name="Detter J.C."/>
            <person name="Han C."/>
            <person name="Tapia R."/>
            <person name="Larimer F."/>
            <person name="Land M."/>
            <person name="Hauser L."/>
            <person name="Kyrpides N."/>
            <person name="Mikhailova N."/>
            <person name="Balakrishnan V."/>
            <person name="Glasner J."/>
            <person name="Perna N.T."/>
        </authorList>
    </citation>
    <scope>NUCLEOTIDE SEQUENCE [LARGE SCALE GENOMIC DNA]</scope>
    <source>
        <strain>PC1</strain>
    </source>
</reference>
<dbReference type="EMBL" id="CP001657">
    <property type="protein sequence ID" value="ACT13579.1"/>
    <property type="molecule type" value="Genomic_DNA"/>
</dbReference>
<dbReference type="RefSeq" id="WP_015840754.1">
    <property type="nucleotide sequence ID" value="NC_012917.1"/>
</dbReference>
<dbReference type="SMR" id="C6DKX8"/>
<dbReference type="STRING" id="561230.PC1_2548"/>
<dbReference type="KEGG" id="pct:PC1_2548"/>
<dbReference type="eggNOG" id="COG5404">
    <property type="taxonomic scope" value="Bacteria"/>
</dbReference>
<dbReference type="HOGENOM" id="CLU_118972_1_0_6"/>
<dbReference type="OrthoDB" id="6464784at2"/>
<dbReference type="Proteomes" id="UP000002736">
    <property type="component" value="Chromosome"/>
</dbReference>
<dbReference type="GO" id="GO:0000917">
    <property type="term" value="P:division septum assembly"/>
    <property type="evidence" value="ECO:0007669"/>
    <property type="project" value="UniProtKB-KW"/>
</dbReference>
<dbReference type="GO" id="GO:0006281">
    <property type="term" value="P:DNA repair"/>
    <property type="evidence" value="ECO:0007669"/>
    <property type="project" value="TreeGrafter"/>
</dbReference>
<dbReference type="GO" id="GO:0051782">
    <property type="term" value="P:negative regulation of cell division"/>
    <property type="evidence" value="ECO:0007669"/>
    <property type="project" value="UniProtKB-UniRule"/>
</dbReference>
<dbReference type="GO" id="GO:0009432">
    <property type="term" value="P:SOS response"/>
    <property type="evidence" value="ECO:0007669"/>
    <property type="project" value="UniProtKB-UniRule"/>
</dbReference>
<dbReference type="Gene3D" id="3.40.50.300">
    <property type="entry name" value="P-loop containing nucleotide triphosphate hydrolases"/>
    <property type="match status" value="1"/>
</dbReference>
<dbReference type="HAMAP" id="MF_01179">
    <property type="entry name" value="SulA"/>
    <property type="match status" value="1"/>
</dbReference>
<dbReference type="InterPro" id="IPR004596">
    <property type="entry name" value="Cell_div_suppressor_SulA"/>
</dbReference>
<dbReference type="InterPro" id="IPR027417">
    <property type="entry name" value="P-loop_NTPase"/>
</dbReference>
<dbReference type="InterPro" id="IPR050356">
    <property type="entry name" value="SulA_CellDiv_inhibitor"/>
</dbReference>
<dbReference type="InterPro" id="IPR047696">
    <property type="entry name" value="SulA_enterobact"/>
</dbReference>
<dbReference type="NCBIfam" id="NF007892">
    <property type="entry name" value="PRK10595.1"/>
    <property type="match status" value="1"/>
</dbReference>
<dbReference type="NCBIfam" id="TIGR00623">
    <property type="entry name" value="SOS_SulA_coli"/>
    <property type="match status" value="1"/>
</dbReference>
<dbReference type="PANTHER" id="PTHR35369">
    <property type="entry name" value="BLR3025 PROTEIN-RELATED"/>
    <property type="match status" value="1"/>
</dbReference>
<dbReference type="PANTHER" id="PTHR35369:SF4">
    <property type="entry name" value="CELL DIVISION INHIBITOR SULA"/>
    <property type="match status" value="1"/>
</dbReference>
<dbReference type="Pfam" id="PF03846">
    <property type="entry name" value="SulA"/>
    <property type="match status" value="1"/>
</dbReference>
<dbReference type="PIRSF" id="PIRSF003093">
    <property type="entry name" value="SulA"/>
    <property type="match status" value="1"/>
</dbReference>
<dbReference type="SUPFAM" id="SSF52540">
    <property type="entry name" value="P-loop containing nucleoside triphosphate hydrolases"/>
    <property type="match status" value="1"/>
</dbReference>
<protein>
    <recommendedName>
        <fullName evidence="1">Cell division inhibitor SulA</fullName>
    </recommendedName>
</protein>
<feature type="chain" id="PRO_1000213755" description="Cell division inhibitor SulA">
    <location>
        <begin position="1"/>
        <end position="168"/>
    </location>
</feature>
<feature type="region of interest" description="FtsZ binding" evidence="1">
    <location>
        <begin position="105"/>
        <end position="111"/>
    </location>
</feature>
<feature type="region of interest" description="Lon protease binding" evidence="1">
    <location>
        <begin position="161"/>
        <end position="168"/>
    </location>
</feature>
<feature type="site" description="Essential for degradation by Lon protease" evidence="1">
    <location>
        <position position="168"/>
    </location>
</feature>